<protein>
    <recommendedName>
        <fullName evidence="2">Small ribosomal subunit protein uS12</fullName>
    </recommendedName>
    <alternativeName>
        <fullName evidence="4">30S ribosomal protein S12</fullName>
    </alternativeName>
</protein>
<feature type="chain" id="PRO_1000194170" description="Small ribosomal subunit protein uS12">
    <location>
        <begin position="1"/>
        <end position="137"/>
    </location>
</feature>
<feature type="region of interest" description="Disordered" evidence="3">
    <location>
        <begin position="1"/>
        <end position="25"/>
    </location>
</feature>
<feature type="modified residue" description="3-methylthioaspartic acid" evidence="1">
    <location>
        <position position="102"/>
    </location>
</feature>
<dbReference type="EMBL" id="AP008971">
    <property type="protein sequence ID" value="BAG07908.1"/>
    <property type="molecule type" value="Genomic_DNA"/>
</dbReference>
<dbReference type="RefSeq" id="WP_002835374.1">
    <property type="nucleotide sequence ID" value="NC_010376.1"/>
</dbReference>
<dbReference type="SMR" id="B0S0I2"/>
<dbReference type="STRING" id="334413.FMG_0490"/>
<dbReference type="GeneID" id="60839857"/>
<dbReference type="KEGG" id="fma:FMG_0490"/>
<dbReference type="eggNOG" id="COG0048">
    <property type="taxonomic scope" value="Bacteria"/>
</dbReference>
<dbReference type="HOGENOM" id="CLU_104295_1_2_9"/>
<dbReference type="Proteomes" id="UP000001319">
    <property type="component" value="Chromosome"/>
</dbReference>
<dbReference type="GO" id="GO:0015935">
    <property type="term" value="C:small ribosomal subunit"/>
    <property type="evidence" value="ECO:0007669"/>
    <property type="project" value="InterPro"/>
</dbReference>
<dbReference type="GO" id="GO:0019843">
    <property type="term" value="F:rRNA binding"/>
    <property type="evidence" value="ECO:0007669"/>
    <property type="project" value="UniProtKB-UniRule"/>
</dbReference>
<dbReference type="GO" id="GO:0003735">
    <property type="term" value="F:structural constituent of ribosome"/>
    <property type="evidence" value="ECO:0007669"/>
    <property type="project" value="InterPro"/>
</dbReference>
<dbReference type="GO" id="GO:0000049">
    <property type="term" value="F:tRNA binding"/>
    <property type="evidence" value="ECO:0007669"/>
    <property type="project" value="UniProtKB-UniRule"/>
</dbReference>
<dbReference type="GO" id="GO:0006412">
    <property type="term" value="P:translation"/>
    <property type="evidence" value="ECO:0007669"/>
    <property type="project" value="UniProtKB-UniRule"/>
</dbReference>
<dbReference type="CDD" id="cd03368">
    <property type="entry name" value="Ribosomal_S12"/>
    <property type="match status" value="1"/>
</dbReference>
<dbReference type="FunFam" id="2.40.50.140:FF:000001">
    <property type="entry name" value="30S ribosomal protein S12"/>
    <property type="match status" value="1"/>
</dbReference>
<dbReference type="Gene3D" id="2.40.50.140">
    <property type="entry name" value="Nucleic acid-binding proteins"/>
    <property type="match status" value="1"/>
</dbReference>
<dbReference type="HAMAP" id="MF_00403_B">
    <property type="entry name" value="Ribosomal_uS12_B"/>
    <property type="match status" value="1"/>
</dbReference>
<dbReference type="InterPro" id="IPR012340">
    <property type="entry name" value="NA-bd_OB-fold"/>
</dbReference>
<dbReference type="InterPro" id="IPR006032">
    <property type="entry name" value="Ribosomal_uS12"/>
</dbReference>
<dbReference type="InterPro" id="IPR005679">
    <property type="entry name" value="Ribosomal_uS12_bac"/>
</dbReference>
<dbReference type="NCBIfam" id="TIGR00981">
    <property type="entry name" value="rpsL_bact"/>
    <property type="match status" value="1"/>
</dbReference>
<dbReference type="PANTHER" id="PTHR11652">
    <property type="entry name" value="30S RIBOSOMAL PROTEIN S12 FAMILY MEMBER"/>
    <property type="match status" value="1"/>
</dbReference>
<dbReference type="Pfam" id="PF00164">
    <property type="entry name" value="Ribosom_S12_S23"/>
    <property type="match status" value="1"/>
</dbReference>
<dbReference type="PRINTS" id="PR01034">
    <property type="entry name" value="RIBOSOMALS12"/>
</dbReference>
<dbReference type="SUPFAM" id="SSF50249">
    <property type="entry name" value="Nucleic acid-binding proteins"/>
    <property type="match status" value="1"/>
</dbReference>
<dbReference type="PROSITE" id="PS00055">
    <property type="entry name" value="RIBOSOMAL_S12"/>
    <property type="match status" value="1"/>
</dbReference>
<reference key="1">
    <citation type="journal article" date="2008" name="DNA Res.">
        <title>Complete genome sequence of Finegoldia magna, an anaerobic opportunistic pathogen.</title>
        <authorList>
            <person name="Goto T."/>
            <person name="Yamashita A."/>
            <person name="Hirakawa H."/>
            <person name="Matsutani M."/>
            <person name="Todo K."/>
            <person name="Ohshima K."/>
            <person name="Toh H."/>
            <person name="Miyamoto K."/>
            <person name="Kuhara S."/>
            <person name="Hattori M."/>
            <person name="Shimizu T."/>
            <person name="Akimoto S."/>
        </authorList>
    </citation>
    <scope>NUCLEOTIDE SEQUENCE [LARGE SCALE GENOMIC DNA]</scope>
    <source>
        <strain>ATCC 29328 / DSM 20472 / WAL 2508</strain>
    </source>
</reference>
<organism>
    <name type="scientific">Finegoldia magna (strain ATCC 29328 / DSM 20472 / WAL 2508)</name>
    <name type="common">Peptostreptococcus magnus</name>
    <dbReference type="NCBI Taxonomy" id="334413"/>
    <lineage>
        <taxon>Bacteria</taxon>
        <taxon>Bacillati</taxon>
        <taxon>Bacillota</taxon>
        <taxon>Tissierellia</taxon>
        <taxon>Tissierellales</taxon>
        <taxon>Peptoniphilaceae</taxon>
        <taxon>Finegoldia</taxon>
    </lineage>
</organism>
<name>RS12_FINM2</name>
<comment type="function">
    <text evidence="2">With S4 and S5 plays an important role in translational accuracy.</text>
</comment>
<comment type="function">
    <text evidence="2">Interacts with and stabilizes bases of the 16S rRNA that are involved in tRNA selection in the A site and with the mRNA backbone. Located at the interface of the 30S and 50S subunits, it traverses the body of the 30S subunit contacting proteins on the other side and probably holding the rRNA structure together. The combined cluster of proteins S8, S12 and S17 appears to hold together the shoulder and platform of the 30S subunit.</text>
</comment>
<comment type="subunit">
    <text evidence="2">Part of the 30S ribosomal subunit. Contacts proteins S8 and S17. May interact with IF1 in the 30S initiation complex.</text>
</comment>
<comment type="similarity">
    <text evidence="2">Belongs to the universal ribosomal protein uS12 family.</text>
</comment>
<sequence>MPTINQLVRQGRKSKTYKSDSPALSRNFNSIKKSYTEANSPQKRGVCTSVRTMTPKKPNSALRKVARVRLTNGMEVLSYIPGIGHNLQEHSVVLIRGGRVKDLPGVRYHIVRGALDTAAVQNRMQGRSKYGAKKPKK</sequence>
<accession>B0S0I2</accession>
<proteinExistence type="inferred from homology"/>
<gene>
    <name evidence="2" type="primary">rpsL</name>
    <name type="ordered locus">FMG_0490</name>
</gene>
<keyword id="KW-0488">Methylation</keyword>
<keyword id="KW-1185">Reference proteome</keyword>
<keyword id="KW-0687">Ribonucleoprotein</keyword>
<keyword id="KW-0689">Ribosomal protein</keyword>
<keyword id="KW-0694">RNA-binding</keyword>
<keyword id="KW-0699">rRNA-binding</keyword>
<keyword id="KW-0820">tRNA-binding</keyword>
<evidence type="ECO:0000250" key="1"/>
<evidence type="ECO:0000255" key="2">
    <source>
        <dbReference type="HAMAP-Rule" id="MF_00403"/>
    </source>
</evidence>
<evidence type="ECO:0000256" key="3">
    <source>
        <dbReference type="SAM" id="MobiDB-lite"/>
    </source>
</evidence>
<evidence type="ECO:0000305" key="4"/>